<reference key="1">
    <citation type="journal article" date="2002" name="Nat. Biotechnol.">
        <title>Genome sequence of the dissimilatory metal ion-reducing bacterium Shewanella oneidensis.</title>
        <authorList>
            <person name="Heidelberg J.F."/>
            <person name="Paulsen I.T."/>
            <person name="Nelson K.E."/>
            <person name="Gaidos E.J."/>
            <person name="Nelson W.C."/>
            <person name="Read T.D."/>
            <person name="Eisen J.A."/>
            <person name="Seshadri R."/>
            <person name="Ward N.L."/>
            <person name="Methe B.A."/>
            <person name="Clayton R.A."/>
            <person name="Meyer T."/>
            <person name="Tsapin A."/>
            <person name="Scott J."/>
            <person name="Beanan M.J."/>
            <person name="Brinkac L.M."/>
            <person name="Daugherty S.C."/>
            <person name="DeBoy R.T."/>
            <person name="Dodson R.J."/>
            <person name="Durkin A.S."/>
            <person name="Haft D.H."/>
            <person name="Kolonay J.F."/>
            <person name="Madupu R."/>
            <person name="Peterson J.D."/>
            <person name="Umayam L.A."/>
            <person name="White O."/>
            <person name="Wolf A.M."/>
            <person name="Vamathevan J.J."/>
            <person name="Weidman J.F."/>
            <person name="Impraim M."/>
            <person name="Lee K."/>
            <person name="Berry K.J."/>
            <person name="Lee C."/>
            <person name="Mueller J."/>
            <person name="Khouri H.M."/>
            <person name="Gill J."/>
            <person name="Utterback T.R."/>
            <person name="McDonald L.A."/>
            <person name="Feldblyum T.V."/>
            <person name="Smith H.O."/>
            <person name="Venter J.C."/>
            <person name="Nealson K.H."/>
            <person name="Fraser C.M."/>
        </authorList>
    </citation>
    <scope>NUCLEOTIDE SEQUENCE [LARGE SCALE GENOMIC DNA]</scope>
    <source>
        <strain>ATCC 700550 / JCM 31522 / CIP 106686 / LMG 19005 / NCIMB 14063 / MR-1</strain>
    </source>
</reference>
<reference key="2">
    <citation type="journal article" date="2013" name="J. Biol. Chem.">
        <title>The origin of 8-amino-3,8-dideoxy-D-manno-octulosonic acid (Kdo8N) in the lipopolysaccharide of Shewanella oneidensis.</title>
        <authorList>
            <person name="Gattis S.G."/>
            <person name="Chung H.S."/>
            <person name="Trent M.S."/>
            <person name="Raetz C.R."/>
        </authorList>
    </citation>
    <scope>FUNCTION</scope>
    <scope>CATALYTIC ACTIVITY</scope>
    <scope>COFACTOR</scope>
    <scope>ACTIVITY REGULATION</scope>
    <scope>PATHWAY</scope>
    <scope>DISRUPTION PHENOTYPE</scope>
    <source>
        <strain>ATCC 700550 / JCM 31522 / CIP 106686 / LMG 19005 / NCIMB 14063 / MR-1</strain>
    </source>
</reference>
<organism>
    <name type="scientific">Shewanella oneidensis (strain ATCC 700550 / JCM 31522 / CIP 106686 / LMG 19005 / NCIMB 14063 / MR-1)</name>
    <dbReference type="NCBI Taxonomy" id="211586"/>
    <lineage>
        <taxon>Bacteria</taxon>
        <taxon>Pseudomonadati</taxon>
        <taxon>Pseudomonadota</taxon>
        <taxon>Gammaproteobacteria</taxon>
        <taxon>Alteromonadales</taxon>
        <taxon>Shewanellaceae</taxon>
        <taxon>Shewanella</taxon>
    </lineage>
</organism>
<proteinExistence type="evidence at protein level"/>
<sequence>MSFKNFKVVEKMIFGRGSFVQLDDVLAAQRKADDDFVVFLVDDVHQGKPLEARIPVKAQDLLIWVNVDEEPSTIQIDALTEQVQAFNGKLPVSVVGLGGGSTMDVAKAVSLMLTNPGGSAMYQGWDLIKKPAVHHIGIPTISGTGAEASRTAVLCGPVRKLGLNSDYTVFDQIIMDSELIDGVETDQWFYTGMDCYIHCVESLEGTFLNEFSKAYAEKAMDLCRQVYLEDHPEKDDKLMMASFMGGMSIAYSQVGACHAVSYGLSYILGYHHGIGNCIAFDVLEEFYPEGVAEFRLMMKKHNITLPKNICKDLPDETIAKMVAVTKSMGPLWANVYGPTWEEKVTDEMLTALFRRI</sequence>
<dbReference type="EC" id="1.1.3.48" evidence="1"/>
<dbReference type="EMBL" id="AE014299">
    <property type="protein sequence ID" value="AAN55508.1"/>
    <property type="molecule type" value="Genomic_DNA"/>
</dbReference>
<dbReference type="RefSeq" id="NP_718064.1">
    <property type="nucleotide sequence ID" value="NC_004347.2"/>
</dbReference>
<dbReference type="RefSeq" id="WP_011072443.1">
    <property type="nucleotide sequence ID" value="NC_004347.2"/>
</dbReference>
<dbReference type="PDB" id="5K8C">
    <property type="method" value="X-ray"/>
    <property type="resolution" value="1.85 A"/>
    <property type="chains" value="A=1-356"/>
</dbReference>
<dbReference type="PDBsum" id="5K8C"/>
<dbReference type="SMR" id="Q8EEB0"/>
<dbReference type="STRING" id="211586.SO_2477"/>
<dbReference type="PaxDb" id="211586-SO_2477"/>
<dbReference type="KEGG" id="son:SO_2477"/>
<dbReference type="PATRIC" id="fig|211586.12.peg.2386"/>
<dbReference type="eggNOG" id="COG1454">
    <property type="taxonomic scope" value="Bacteria"/>
</dbReference>
<dbReference type="HOGENOM" id="CLU_773153_0_0_6"/>
<dbReference type="OrthoDB" id="9815791at2"/>
<dbReference type="PhylomeDB" id="Q8EEB0"/>
<dbReference type="BioCyc" id="MetaCyc:MONOMER-19348"/>
<dbReference type="BioCyc" id="SONE211586:G1GMP-2263-MONOMER"/>
<dbReference type="BRENDA" id="1.1.3.48">
    <property type="organism ID" value="5706"/>
</dbReference>
<dbReference type="UniPathway" id="UPA00030"/>
<dbReference type="Proteomes" id="UP000008186">
    <property type="component" value="Chromosome"/>
</dbReference>
<dbReference type="GO" id="GO:0004022">
    <property type="term" value="F:alcohol dehydrogenase (NAD+) activity"/>
    <property type="evidence" value="ECO:0000318"/>
    <property type="project" value="GO_Central"/>
</dbReference>
<dbReference type="GO" id="GO:0046872">
    <property type="term" value="F:metal ion binding"/>
    <property type="evidence" value="ECO:0007669"/>
    <property type="project" value="UniProtKB-KW"/>
</dbReference>
<dbReference type="GO" id="GO:0009103">
    <property type="term" value="P:lipopolysaccharide biosynthetic process"/>
    <property type="evidence" value="ECO:0007669"/>
    <property type="project" value="UniProtKB-UniPathway"/>
</dbReference>
<dbReference type="CDD" id="cd08184">
    <property type="entry name" value="Fe-ADH_KdnB-like"/>
    <property type="match status" value="1"/>
</dbReference>
<dbReference type="FunFam" id="1.20.1090.10:FF:000021">
    <property type="entry name" value="Alcohol dehydrogenase, iron-dependent"/>
    <property type="match status" value="1"/>
</dbReference>
<dbReference type="Gene3D" id="3.40.50.1970">
    <property type="match status" value="1"/>
</dbReference>
<dbReference type="Gene3D" id="1.20.1090.10">
    <property type="entry name" value="Dehydroquinate synthase-like - alpha domain"/>
    <property type="match status" value="1"/>
</dbReference>
<dbReference type="InterPro" id="IPR001670">
    <property type="entry name" value="ADH_Fe/GldA"/>
</dbReference>
<dbReference type="InterPro" id="IPR056798">
    <property type="entry name" value="ADH_Fe_C"/>
</dbReference>
<dbReference type="InterPro" id="IPR039697">
    <property type="entry name" value="Alcohol_dehydrogenase_Fe"/>
</dbReference>
<dbReference type="PANTHER" id="PTHR11496:SF104">
    <property type="entry name" value="3-DEOXY-ALPHA-D-MANNO-OCTULOSONATE 8-OXIDASE"/>
    <property type="match status" value="1"/>
</dbReference>
<dbReference type="PANTHER" id="PTHR11496">
    <property type="entry name" value="ALCOHOL DEHYDROGENASE"/>
    <property type="match status" value="1"/>
</dbReference>
<dbReference type="Pfam" id="PF25137">
    <property type="entry name" value="ADH_Fe_C"/>
    <property type="match status" value="1"/>
</dbReference>
<dbReference type="Pfam" id="PF00465">
    <property type="entry name" value="Fe-ADH"/>
    <property type="match status" value="1"/>
</dbReference>
<dbReference type="SUPFAM" id="SSF56796">
    <property type="entry name" value="Dehydroquinate synthase-like"/>
    <property type="match status" value="1"/>
</dbReference>
<comment type="function">
    <text evidence="1">Catalyzes the first step of the biosynthesis of Kdo8N (8-amino-3,8-dideoxy-D-manno-octulosonate) from Kdo (3-deoxy-D-manno-octulosonate).</text>
</comment>
<comment type="catalytic activity">
    <reaction evidence="1">
        <text>3-deoxy-alpha-D-manno-oct-2-ulosonate + O2 = 3,8-dideoxy-8-oxo-alpha-D-manno-octulosonate + H2O2</text>
        <dbReference type="Rhea" id="RHEA:46888"/>
        <dbReference type="ChEBI" id="CHEBI:15379"/>
        <dbReference type="ChEBI" id="CHEBI:16240"/>
        <dbReference type="ChEBI" id="CHEBI:85986"/>
        <dbReference type="ChEBI" id="CHEBI:87090"/>
        <dbReference type="EC" id="1.1.3.48"/>
    </reaction>
</comment>
<comment type="cofactor">
    <cofactor evidence="1">
        <name>a divalent metal cation</name>
        <dbReference type="ChEBI" id="CHEBI:60240"/>
    </cofactor>
    <text evidence="1">Shows highest activity with Mn(2+) and Fe(2+).</text>
</comment>
<comment type="activity regulation">
    <text evidence="1">Inhibited by EDTA.</text>
</comment>
<comment type="pathway">
    <text evidence="1">Bacterial outer membrane biogenesis; lipopolysaccharide biosynthesis.</text>
</comment>
<comment type="disruption phenotype">
    <text evidence="1">A double kdnA/kdnB deletion mutant shows increased sensitivity to polymyxin B and bile salts.</text>
</comment>
<comment type="miscellaneous">
    <text evidence="4">Kdo8N is found in lipopolysaccharides of members of the Shewanella genus.</text>
</comment>
<comment type="similarity">
    <text evidence="3">Belongs to the iron-containing alcohol dehydrogenase family.</text>
</comment>
<gene>
    <name evidence="2" type="primary">kdnB</name>
    <name evidence="5" type="ordered locus">SO_2477</name>
</gene>
<name>KDNB_SHEON</name>
<protein>
    <recommendedName>
        <fullName evidence="3">3-deoxy-alpha-D-manno-octulosonate 8-oxidase</fullName>
        <ecNumber evidence="1">1.1.3.48</ecNumber>
    </recommendedName>
</protein>
<keyword id="KW-0002">3D-structure</keyword>
<keyword id="KW-0408">Iron</keyword>
<keyword id="KW-0448">Lipopolysaccharide biosynthesis</keyword>
<keyword id="KW-0464">Manganese</keyword>
<keyword id="KW-0479">Metal-binding</keyword>
<keyword id="KW-0560">Oxidoreductase</keyword>
<keyword id="KW-1185">Reference proteome</keyword>
<accession>Q8EEB0</accession>
<evidence type="ECO:0000269" key="1">
    <source>
    </source>
</evidence>
<evidence type="ECO:0000303" key="2">
    <source>
    </source>
</evidence>
<evidence type="ECO:0000305" key="3"/>
<evidence type="ECO:0000305" key="4">
    <source>
    </source>
</evidence>
<evidence type="ECO:0000312" key="5">
    <source>
        <dbReference type="EMBL" id="AAN55508.1"/>
    </source>
</evidence>
<evidence type="ECO:0007829" key="6">
    <source>
        <dbReference type="PDB" id="5K8C"/>
    </source>
</evidence>
<feature type="chain" id="PRO_0000434589" description="3-deoxy-alpha-D-manno-octulosonate 8-oxidase">
    <location>
        <begin position="1"/>
        <end position="356"/>
    </location>
</feature>
<feature type="strand" evidence="6">
    <location>
        <begin position="10"/>
        <end position="15"/>
    </location>
</feature>
<feature type="helix" evidence="6">
    <location>
        <begin position="18"/>
        <end position="21"/>
    </location>
</feature>
<feature type="helix" evidence="6">
    <location>
        <begin position="22"/>
        <end position="29"/>
    </location>
</feature>
<feature type="strand" evidence="6">
    <location>
        <begin position="37"/>
        <end position="42"/>
    </location>
</feature>
<feature type="helix" evidence="6">
    <location>
        <begin position="43"/>
        <end position="45"/>
    </location>
</feature>
<feature type="helix" evidence="6">
    <location>
        <begin position="49"/>
        <end position="53"/>
    </location>
</feature>
<feature type="strand" evidence="6">
    <location>
        <begin position="61"/>
        <end position="65"/>
    </location>
</feature>
<feature type="helix" evidence="6">
    <location>
        <begin position="73"/>
        <end position="86"/>
    </location>
</feature>
<feature type="strand" evidence="6">
    <location>
        <begin position="92"/>
        <end position="99"/>
    </location>
</feature>
<feature type="helix" evidence="6">
    <location>
        <begin position="100"/>
        <end position="112"/>
    </location>
</feature>
<feature type="helix" evidence="6">
    <location>
        <begin position="120"/>
        <end position="122"/>
    </location>
</feature>
<feature type="strand" evidence="6">
    <location>
        <begin position="124"/>
        <end position="126"/>
    </location>
</feature>
<feature type="strand" evidence="6">
    <location>
        <begin position="135"/>
        <end position="141"/>
    </location>
</feature>
<feature type="turn" evidence="6">
    <location>
        <begin position="146"/>
        <end position="148"/>
    </location>
</feature>
<feature type="strand" evidence="6">
    <location>
        <begin position="153"/>
        <end position="155"/>
    </location>
</feature>
<feature type="strand" evidence="6">
    <location>
        <begin position="157"/>
        <end position="164"/>
    </location>
</feature>
<feature type="helix" evidence="6">
    <location>
        <begin position="166"/>
        <end position="168"/>
    </location>
</feature>
<feature type="strand" evidence="6">
    <location>
        <begin position="171"/>
        <end position="175"/>
    </location>
</feature>
<feature type="helix" evidence="6">
    <location>
        <begin position="177"/>
        <end position="180"/>
    </location>
</feature>
<feature type="helix" evidence="6">
    <location>
        <begin position="185"/>
        <end position="203"/>
    </location>
</feature>
<feature type="helix" evidence="6">
    <location>
        <begin position="210"/>
        <end position="228"/>
    </location>
</feature>
<feature type="helix" evidence="6">
    <location>
        <begin position="234"/>
        <end position="247"/>
    </location>
</feature>
<feature type="helix" evidence="6">
    <location>
        <begin position="248"/>
        <end position="251"/>
    </location>
</feature>
<feature type="helix" evidence="6">
    <location>
        <begin position="256"/>
        <end position="268"/>
    </location>
</feature>
<feature type="helix" evidence="6">
    <location>
        <begin position="272"/>
        <end position="280"/>
    </location>
</feature>
<feature type="turn" evidence="6">
    <location>
        <begin position="284"/>
        <end position="286"/>
    </location>
</feature>
<feature type="helix" evidence="6">
    <location>
        <begin position="288"/>
        <end position="300"/>
    </location>
</feature>
<feature type="helix" evidence="6">
    <location>
        <begin position="315"/>
        <end position="326"/>
    </location>
</feature>
<feature type="helix" evidence="6">
    <location>
        <begin position="329"/>
        <end position="336"/>
    </location>
</feature>
<feature type="helix" evidence="6">
    <location>
        <begin position="340"/>
        <end position="342"/>
    </location>
</feature>
<feature type="helix" evidence="6">
    <location>
        <begin position="346"/>
        <end position="355"/>
    </location>
</feature>